<gene>
    <name evidence="1" type="primary">PAN2</name>
    <name type="ordered locus">YALI0E29403g</name>
</gene>
<keyword id="KW-0963">Cytoplasm</keyword>
<keyword id="KW-0269">Exonuclease</keyword>
<keyword id="KW-0378">Hydrolase</keyword>
<keyword id="KW-0479">Metal-binding</keyword>
<keyword id="KW-0507">mRNA processing</keyword>
<keyword id="KW-0540">Nuclease</keyword>
<keyword id="KW-1185">Reference proteome</keyword>
<keyword id="KW-0677">Repeat</keyword>
<keyword id="KW-0853">WD repeat</keyword>
<proteinExistence type="inferred from homology"/>
<feature type="chain" id="PRO_0000295355" description="PAN2-PAN3 deadenylation complex catalytic subunit PAN2">
    <location>
        <begin position="1"/>
        <end position="1008"/>
    </location>
</feature>
<feature type="repeat" description="WD 1" evidence="1">
    <location>
        <begin position="29"/>
        <end position="68"/>
    </location>
</feature>
<feature type="repeat" description="WD 2" evidence="1">
    <location>
        <begin position="110"/>
        <end position="149"/>
    </location>
</feature>
<feature type="repeat" description="WD 3" evidence="1">
    <location>
        <begin position="158"/>
        <end position="198"/>
    </location>
</feature>
<feature type="repeat" description="WD 4" evidence="1">
    <location>
        <begin position="200"/>
        <end position="236"/>
    </location>
</feature>
<feature type="repeat" description="WD 5" evidence="1">
    <location>
        <begin position="277"/>
        <end position="316"/>
    </location>
</feature>
<feature type="domain" description="USP" evidence="1">
    <location>
        <begin position="450"/>
        <end position="755"/>
    </location>
</feature>
<feature type="domain" description="Exonuclease" evidence="1">
    <location>
        <begin position="808"/>
        <end position="976"/>
    </location>
</feature>
<feature type="region of interest" description="Linker" evidence="1">
    <location>
        <begin position="314"/>
        <end position="449"/>
    </location>
</feature>
<feature type="binding site" evidence="1">
    <location>
        <position position="810"/>
    </location>
    <ligand>
        <name>a divalent metal cation</name>
        <dbReference type="ChEBI" id="CHEBI:60240"/>
        <note>catalytic</note>
    </ligand>
</feature>
<feature type="binding site" evidence="1">
    <location>
        <position position="812"/>
    </location>
    <ligand>
        <name>a divalent metal cation</name>
        <dbReference type="ChEBI" id="CHEBI:60240"/>
        <note>catalytic</note>
    </ligand>
</feature>
<feature type="binding site" evidence="1">
    <location>
        <position position="915"/>
    </location>
    <ligand>
        <name>a divalent metal cation</name>
        <dbReference type="ChEBI" id="CHEBI:60240"/>
        <note>catalytic</note>
    </ligand>
</feature>
<feature type="binding site" evidence="1">
    <location>
        <position position="968"/>
    </location>
    <ligand>
        <name>a divalent metal cation</name>
        <dbReference type="ChEBI" id="CHEBI:60240"/>
        <note>catalytic</note>
    </ligand>
</feature>
<dbReference type="EC" id="3.1.13.4" evidence="1"/>
<dbReference type="EMBL" id="CR382131">
    <property type="protein sequence ID" value="CAG80154.1"/>
    <property type="status" value="ALT_SEQ"/>
    <property type="molecule type" value="Genomic_DNA"/>
</dbReference>
<dbReference type="RefSeq" id="XP_504550.1">
    <property type="nucleotide sequence ID" value="XM_504550.1"/>
</dbReference>
<dbReference type="SMR" id="Q6C462"/>
<dbReference type="FunCoup" id="Q6C462">
    <property type="interactions" value="707"/>
</dbReference>
<dbReference type="STRING" id="284591.Q6C462"/>
<dbReference type="KEGG" id="yli:2911982"/>
<dbReference type="InParanoid" id="Q6C462"/>
<dbReference type="OrthoDB" id="110996at4891"/>
<dbReference type="Proteomes" id="UP000001300">
    <property type="component" value="Chromosome E"/>
</dbReference>
<dbReference type="GO" id="GO:0000932">
    <property type="term" value="C:P-body"/>
    <property type="evidence" value="ECO:0000318"/>
    <property type="project" value="GO_Central"/>
</dbReference>
<dbReference type="GO" id="GO:0031251">
    <property type="term" value="C:PAN complex"/>
    <property type="evidence" value="ECO:0000318"/>
    <property type="project" value="GO_Central"/>
</dbReference>
<dbReference type="GO" id="GO:0046872">
    <property type="term" value="F:metal ion binding"/>
    <property type="evidence" value="ECO:0007669"/>
    <property type="project" value="UniProtKB-KW"/>
</dbReference>
<dbReference type="GO" id="GO:0003676">
    <property type="term" value="F:nucleic acid binding"/>
    <property type="evidence" value="ECO:0007669"/>
    <property type="project" value="InterPro"/>
</dbReference>
<dbReference type="GO" id="GO:0004535">
    <property type="term" value="F:poly(A)-specific ribonuclease activity"/>
    <property type="evidence" value="ECO:0007669"/>
    <property type="project" value="UniProtKB-UniRule"/>
</dbReference>
<dbReference type="GO" id="GO:0006397">
    <property type="term" value="P:mRNA processing"/>
    <property type="evidence" value="ECO:0007669"/>
    <property type="project" value="UniProtKB-KW"/>
</dbReference>
<dbReference type="GO" id="GO:0000289">
    <property type="term" value="P:nuclear-transcribed mRNA poly(A) tail shortening"/>
    <property type="evidence" value="ECO:0000318"/>
    <property type="project" value="GO_Central"/>
</dbReference>
<dbReference type="CDD" id="cd06143">
    <property type="entry name" value="PAN2_exo"/>
    <property type="match status" value="1"/>
</dbReference>
<dbReference type="CDD" id="cd02672">
    <property type="entry name" value="Peptidase_C19P"/>
    <property type="match status" value="1"/>
</dbReference>
<dbReference type="FunFam" id="3.30.420.10:FF:000028">
    <property type="entry name" value="PAN2-PAN3 deadenylation complex catalytic subunit PAN2"/>
    <property type="match status" value="1"/>
</dbReference>
<dbReference type="Gene3D" id="3.90.70.10">
    <property type="entry name" value="Cysteine proteinases"/>
    <property type="match status" value="1"/>
</dbReference>
<dbReference type="Gene3D" id="3.30.420.10">
    <property type="entry name" value="Ribonuclease H-like superfamily/Ribonuclease H"/>
    <property type="match status" value="1"/>
</dbReference>
<dbReference type="Gene3D" id="2.130.10.10">
    <property type="entry name" value="YVTN repeat-like/Quinoprotein amine dehydrogenase"/>
    <property type="match status" value="1"/>
</dbReference>
<dbReference type="HAMAP" id="MF_03182">
    <property type="entry name" value="PAN2"/>
    <property type="match status" value="1"/>
</dbReference>
<dbReference type="InterPro" id="IPR013520">
    <property type="entry name" value="Exonuclease_RNaseT/DNA_pol3"/>
</dbReference>
<dbReference type="InterPro" id="IPR011048">
    <property type="entry name" value="Haem_d1_sf"/>
</dbReference>
<dbReference type="InterPro" id="IPR030843">
    <property type="entry name" value="PAN2"/>
</dbReference>
<dbReference type="InterPro" id="IPR050785">
    <property type="entry name" value="PAN2-PAN3_catalytic_subunit"/>
</dbReference>
<dbReference type="InterPro" id="IPR048841">
    <property type="entry name" value="PAN2_N"/>
</dbReference>
<dbReference type="InterPro" id="IPR028881">
    <property type="entry name" value="PAN2_UCH_dom"/>
</dbReference>
<dbReference type="InterPro" id="IPR038765">
    <property type="entry name" value="Papain-like_cys_pep_sf"/>
</dbReference>
<dbReference type="InterPro" id="IPR012337">
    <property type="entry name" value="RNaseH-like_sf"/>
</dbReference>
<dbReference type="InterPro" id="IPR036397">
    <property type="entry name" value="RNaseH_sf"/>
</dbReference>
<dbReference type="InterPro" id="IPR028889">
    <property type="entry name" value="USP_dom"/>
</dbReference>
<dbReference type="InterPro" id="IPR015943">
    <property type="entry name" value="WD40/YVTN_repeat-like_dom_sf"/>
</dbReference>
<dbReference type="InterPro" id="IPR001680">
    <property type="entry name" value="WD40_rpt"/>
</dbReference>
<dbReference type="PANTHER" id="PTHR15728">
    <property type="entry name" value="DEADENYLATION COMPLEX CATALYTIC SUBUNIT PAN2"/>
    <property type="match status" value="1"/>
</dbReference>
<dbReference type="PANTHER" id="PTHR15728:SF0">
    <property type="entry name" value="PAN2-PAN3 DEADENYLATION COMPLEX CATALYTIC SUBUNIT PAN2"/>
    <property type="match status" value="1"/>
</dbReference>
<dbReference type="Pfam" id="PF20770">
    <property type="entry name" value="PAN2_N"/>
    <property type="match status" value="1"/>
</dbReference>
<dbReference type="Pfam" id="PF00929">
    <property type="entry name" value="RNase_T"/>
    <property type="match status" value="1"/>
</dbReference>
<dbReference type="Pfam" id="PF13423">
    <property type="entry name" value="UCH_1"/>
    <property type="match status" value="1"/>
</dbReference>
<dbReference type="SMART" id="SM00479">
    <property type="entry name" value="EXOIII"/>
    <property type="match status" value="1"/>
</dbReference>
<dbReference type="SMART" id="SM00320">
    <property type="entry name" value="WD40"/>
    <property type="match status" value="2"/>
</dbReference>
<dbReference type="SUPFAM" id="SSF51004">
    <property type="entry name" value="C-terminal (heme d1) domain of cytochrome cd1-nitrite reductase"/>
    <property type="match status" value="1"/>
</dbReference>
<dbReference type="SUPFAM" id="SSF54001">
    <property type="entry name" value="Cysteine proteinases"/>
    <property type="match status" value="1"/>
</dbReference>
<dbReference type="SUPFAM" id="SSF53098">
    <property type="entry name" value="Ribonuclease H-like"/>
    <property type="match status" value="1"/>
</dbReference>
<dbReference type="PROSITE" id="PS50235">
    <property type="entry name" value="USP_3"/>
    <property type="match status" value="1"/>
</dbReference>
<protein>
    <recommendedName>
        <fullName evidence="1">PAN2-PAN3 deadenylation complex catalytic subunit PAN2</fullName>
        <ecNumber evidence="1">3.1.13.4</ecNumber>
    </recommendedName>
    <alternativeName>
        <fullName evidence="1">PAB1P-dependent poly(A)-specific ribonuclease</fullName>
    </alternativeName>
    <alternativeName>
        <fullName evidence="1">Poly(A)-nuclease deadenylation complex subunit 2</fullName>
        <shortName evidence="1">PAN deadenylation complex subunit 2</shortName>
    </alternativeName>
</protein>
<reference key="1">
    <citation type="journal article" date="2004" name="Nature">
        <title>Genome evolution in yeasts.</title>
        <authorList>
            <person name="Dujon B."/>
            <person name="Sherman D."/>
            <person name="Fischer G."/>
            <person name="Durrens P."/>
            <person name="Casaregola S."/>
            <person name="Lafontaine I."/>
            <person name="de Montigny J."/>
            <person name="Marck C."/>
            <person name="Neuveglise C."/>
            <person name="Talla E."/>
            <person name="Goffard N."/>
            <person name="Frangeul L."/>
            <person name="Aigle M."/>
            <person name="Anthouard V."/>
            <person name="Babour A."/>
            <person name="Barbe V."/>
            <person name="Barnay S."/>
            <person name="Blanchin S."/>
            <person name="Beckerich J.-M."/>
            <person name="Beyne E."/>
            <person name="Bleykasten C."/>
            <person name="Boisrame A."/>
            <person name="Boyer J."/>
            <person name="Cattolico L."/>
            <person name="Confanioleri F."/>
            <person name="de Daruvar A."/>
            <person name="Despons L."/>
            <person name="Fabre E."/>
            <person name="Fairhead C."/>
            <person name="Ferry-Dumazet H."/>
            <person name="Groppi A."/>
            <person name="Hantraye F."/>
            <person name="Hennequin C."/>
            <person name="Jauniaux N."/>
            <person name="Joyet P."/>
            <person name="Kachouri R."/>
            <person name="Kerrest A."/>
            <person name="Koszul R."/>
            <person name="Lemaire M."/>
            <person name="Lesur I."/>
            <person name="Ma L."/>
            <person name="Muller H."/>
            <person name="Nicaud J.-M."/>
            <person name="Nikolski M."/>
            <person name="Oztas S."/>
            <person name="Ozier-Kalogeropoulos O."/>
            <person name="Pellenz S."/>
            <person name="Potier S."/>
            <person name="Richard G.-F."/>
            <person name="Straub M.-L."/>
            <person name="Suleau A."/>
            <person name="Swennen D."/>
            <person name="Tekaia F."/>
            <person name="Wesolowski-Louvel M."/>
            <person name="Westhof E."/>
            <person name="Wirth B."/>
            <person name="Zeniou-Meyer M."/>
            <person name="Zivanovic Y."/>
            <person name="Bolotin-Fukuhara M."/>
            <person name="Thierry A."/>
            <person name="Bouchier C."/>
            <person name="Caudron B."/>
            <person name="Scarpelli C."/>
            <person name="Gaillardin C."/>
            <person name="Weissenbach J."/>
            <person name="Wincker P."/>
            <person name="Souciet J.-L."/>
        </authorList>
    </citation>
    <scope>NUCLEOTIDE SEQUENCE [LARGE SCALE GENOMIC DNA]</scope>
    <source>
        <strain>CLIB 122 / E 150</strain>
    </source>
</reference>
<accession>Q6C462</accession>
<evidence type="ECO:0000255" key="1">
    <source>
        <dbReference type="HAMAP-Rule" id="MF_03182"/>
    </source>
</evidence>
<evidence type="ECO:0000305" key="2"/>
<name>PAN2_YARLI</name>
<sequence>MEGWQEPPRIPLTQICRVSHTAPVATEIGQLTDTLPLTFDLAEDLVWAGDTNGIVSSYYGETLQPYSRFRAGRGRVTSLVSHDRGLVALTTDALHYSTRGGLTRKHVTDPSLGNNLCMTFTHGPTEFVVGGNPGKLVVVNSERGDVTRVVDSPGMATHMAGSSSCVVWGTENGKLVVGDNNLKELHTFQAHQGPFSDVSVQDNVVMTCGFSAASTGHRIDPLIKVWDLRMMRAMAPISYPLAAFVCQTPDSRTLITSPSGQLEFLDHATQQIKLYQAEVALVNGVKLSPRGHHFVVSDTSGQLQLWSDEPQSSFAEFSAPTAFPTPEQSYPPVSIRDTRYPLGAVGMPYYSDTLLSAMPSSIINVGMPPEEVDEDLEVRQIDFVGHAPNYKQQKRNLAQKYSNQRRTSIAAPKFLSEKEKERARRMEDIEDESFFGDEDTCTEASMSSKKVPRLYRKLEIKYSKFGISDFDFSYYNNHTGLSGLETNPFNPLLQLFRFCSPVFNFALRSVARGTPNRLLNEVGLLFDMMHKARGHVCRASNLMHCYDGIAQTRSLAPEDATNIVLFCRFLLEQIGFEQRQTPALFDSFRQLLGATVITVNTFSCGKMAQAESVWYTLELALGSTFYECLERTLDKELHTRAWCDKCRKYQSLHVSKHVESLPQVLTLSVADGNVDVAKSFLVLDGKVSPAAETDNDAYKLVGFICQIQGNGQVAFIRVGDEWYLFNDFLVTKVSEKEAFMKTPWKRTVMMVYAVGADERFDYDSWKNDMDVSALFEERLVNGNNVSRETTDYGYELIKEVPPPKTLCAIDAEFVVLKNEETEIRSDGTKVVLAPRNLCLARVTLLNEDGHPFINDYIAINEHIVDYLTAFSGIEPGDLDPSISRKPLVSLPTSYRRLWLLLNLGCVFVGHGLANDFRTINMQVPPEQVIDTVDLYYIPSERRKLSLRFLAWCVLGKKVQSGNHDSTEDSHTALLLYKKYQDCAPEEFQVLLLDVYRQGRMCNFKVPEA</sequence>
<comment type="function">
    <text evidence="1">Catalytic subunit of the poly(A)-nuclease (PAN) deadenylation complex, one of two cytoplasmic mRNA deadenylases involved in mRNA turnover. PAN specifically shortens poly(A) tails of RNA and the activity is stimulated by poly(A)-binding protein PAB1. PAN deadenylation is followed by rapid degradation of the shortened mRNA tails by the CCR4-NOT complex. Deadenylated mRNAs are then degraded by two alternative mechanisms, namely exosome-mediated 3'-5' exonucleolytic degradation, or deadenylation-dependent mRNA decaping and subsequent 5'-3' exonucleolytic degradation by XRN1. May also be involved in post-transcriptional maturation of mRNA poly(A) tails.</text>
</comment>
<comment type="catalytic activity">
    <reaction evidence="1">
        <text>Exonucleolytic cleavage of poly(A) to 5'-AMP.</text>
        <dbReference type="EC" id="3.1.13.4"/>
    </reaction>
</comment>
<comment type="cofactor">
    <cofactor evidence="1">
        <name>a divalent metal cation</name>
        <dbReference type="ChEBI" id="CHEBI:60240"/>
    </cofactor>
    <text evidence="1">Binds 2 metal cations per subunit in the catalytic exonuclease domain.</text>
</comment>
<comment type="activity regulation">
    <text evidence="1">Positively regulated by the regulatory subunit PAN3.</text>
</comment>
<comment type="subunit">
    <text evidence="1">Forms a heterotrimer with an asymmetric homodimer of the regulatory subunit PAN3 to form the poly(A)-nuclease (PAN) deadenylation complex.</text>
</comment>
<comment type="subcellular location">
    <subcellularLocation>
        <location evidence="1">Cytoplasm</location>
    </subcellularLocation>
</comment>
<comment type="domain">
    <text evidence="1">Contains a pseudo-UCH domain. This ubiquitin C-terminal hydrolase (UCH)-like or ubiquitin specific protease (USP)-like domain is predicted to be catalytically inactive because it lacks the active site catalytic triad characteristic of thiol proteases, with residues at the equivalent structural positions that are incompatible with catalysis, and it cannot bind ubiquitin. It functions as a structural scaffold for intra- and intermolecular interactions in the complex.</text>
</comment>
<comment type="domain">
    <text evidence="1">The linker, or PAN3 interaction domain (PID), between the WD40 repeats and the pseudo-UCH domain mediates interaction with PAN3.</text>
</comment>
<comment type="similarity">
    <text evidence="1">Belongs to the peptidase C19 family. PAN2 subfamily.</text>
</comment>
<comment type="sequence caution" evidence="2">
    <conflict type="erroneous gene model prediction">
        <sequence resource="EMBL-CDS" id="CAG80154"/>
    </conflict>
</comment>
<organism>
    <name type="scientific">Yarrowia lipolytica (strain CLIB 122 / E 150)</name>
    <name type="common">Yeast</name>
    <name type="synonym">Candida lipolytica</name>
    <dbReference type="NCBI Taxonomy" id="284591"/>
    <lineage>
        <taxon>Eukaryota</taxon>
        <taxon>Fungi</taxon>
        <taxon>Dikarya</taxon>
        <taxon>Ascomycota</taxon>
        <taxon>Saccharomycotina</taxon>
        <taxon>Dipodascomycetes</taxon>
        <taxon>Dipodascales</taxon>
        <taxon>Dipodascales incertae sedis</taxon>
        <taxon>Yarrowia</taxon>
    </lineage>
</organism>